<organism>
    <name type="scientific">Arabidopsis thaliana</name>
    <name type="common">Mouse-ear cress</name>
    <dbReference type="NCBI Taxonomy" id="3702"/>
    <lineage>
        <taxon>Eukaryota</taxon>
        <taxon>Viridiplantae</taxon>
        <taxon>Streptophyta</taxon>
        <taxon>Embryophyta</taxon>
        <taxon>Tracheophyta</taxon>
        <taxon>Spermatophyta</taxon>
        <taxon>Magnoliopsida</taxon>
        <taxon>eudicotyledons</taxon>
        <taxon>Gunneridae</taxon>
        <taxon>Pentapetalae</taxon>
        <taxon>rosids</taxon>
        <taxon>malvids</taxon>
        <taxon>Brassicales</taxon>
        <taxon>Brassicaceae</taxon>
        <taxon>Camelineae</taxon>
        <taxon>Arabidopsis</taxon>
    </lineage>
</organism>
<evidence type="ECO:0000250" key="1"/>
<evidence type="ECO:0000250" key="2">
    <source>
        <dbReference type="UniProtKB" id="Q86PC9"/>
    </source>
</evidence>
<evidence type="ECO:0000250" key="3">
    <source>
        <dbReference type="UniProtKB" id="Q9SQU1"/>
    </source>
</evidence>
<evidence type="ECO:0000255" key="4">
    <source>
        <dbReference type="PROSITE-ProRule" id="PRU00080"/>
    </source>
</evidence>
<evidence type="ECO:0000256" key="5">
    <source>
        <dbReference type="SAM" id="MobiDB-lite"/>
    </source>
</evidence>
<evidence type="ECO:0000269" key="6">
    <source>
    </source>
</evidence>
<evidence type="ECO:0000269" key="7">
    <source>
    </source>
</evidence>
<evidence type="ECO:0000269" key="8">
    <source>
    </source>
</evidence>
<evidence type="ECO:0000303" key="9">
    <source>
    </source>
</evidence>
<evidence type="ECO:0000303" key="10">
    <source>
    </source>
</evidence>
<evidence type="ECO:0000305" key="11"/>
<evidence type="ECO:0000312" key="12">
    <source>
        <dbReference type="Araport" id="AT1G25280"/>
    </source>
</evidence>
<evidence type="ECO:0000312" key="13">
    <source>
        <dbReference type="EMBL" id="AAG28805.1"/>
    </source>
</evidence>
<dbReference type="EMBL" id="AF487271">
    <property type="protein sequence ID" value="AAQ06244.1"/>
    <property type="molecule type" value="mRNA"/>
</dbReference>
<dbReference type="EMBL" id="AC079374">
    <property type="protein sequence ID" value="AAG28805.1"/>
    <property type="molecule type" value="Genomic_DNA"/>
</dbReference>
<dbReference type="EMBL" id="CP002684">
    <property type="protein sequence ID" value="AEE30599.1"/>
    <property type="molecule type" value="Genomic_DNA"/>
</dbReference>
<dbReference type="EMBL" id="AY140459">
    <property type="protein sequence ID" value="AAN46223.1"/>
    <property type="molecule type" value="Genomic_DNA"/>
</dbReference>
<dbReference type="EMBL" id="AY140460">
    <property type="protein sequence ID" value="AAN46224.1"/>
    <property type="molecule type" value="Genomic_DNA"/>
</dbReference>
<dbReference type="EMBL" id="AY140461">
    <property type="protein sequence ID" value="AAN46225.1"/>
    <property type="molecule type" value="Genomic_DNA"/>
</dbReference>
<dbReference type="EMBL" id="AY140462">
    <property type="protein sequence ID" value="AAN46226.1"/>
    <property type="molecule type" value="Genomic_DNA"/>
</dbReference>
<dbReference type="EMBL" id="AY140463">
    <property type="protein sequence ID" value="AAN46227.1"/>
    <property type="molecule type" value="Genomic_DNA"/>
</dbReference>
<dbReference type="EMBL" id="AY140464">
    <property type="protein sequence ID" value="AAN46228.1"/>
    <property type="molecule type" value="Genomic_DNA"/>
</dbReference>
<dbReference type="EMBL" id="AY140465">
    <property type="protein sequence ID" value="AAN46229.1"/>
    <property type="molecule type" value="Genomic_DNA"/>
</dbReference>
<dbReference type="EMBL" id="AY140466">
    <property type="protein sequence ID" value="AAN46230.1"/>
    <property type="molecule type" value="Genomic_DNA"/>
</dbReference>
<dbReference type="EMBL" id="AY140467">
    <property type="protein sequence ID" value="AAN46231.1"/>
    <property type="molecule type" value="Genomic_DNA"/>
</dbReference>
<dbReference type="EMBL" id="AY140468">
    <property type="protein sequence ID" value="AAN46232.1"/>
    <property type="molecule type" value="Genomic_DNA"/>
</dbReference>
<dbReference type="EMBL" id="AY140469">
    <property type="protein sequence ID" value="AAN46233.1"/>
    <property type="molecule type" value="Genomic_DNA"/>
</dbReference>
<dbReference type="EMBL" id="AK317199">
    <property type="protein sequence ID" value="BAH19883.1"/>
    <property type="molecule type" value="mRNA"/>
</dbReference>
<dbReference type="EMBL" id="BT001997">
    <property type="protein sequence ID" value="AAN72008.1"/>
    <property type="molecule type" value="mRNA"/>
</dbReference>
<dbReference type="EMBL" id="BT006290">
    <property type="protein sequence ID" value="AAP13398.1"/>
    <property type="molecule type" value="mRNA"/>
</dbReference>
<dbReference type="PIR" id="E86382">
    <property type="entry name" value="E86382"/>
</dbReference>
<dbReference type="RefSeq" id="NP_001117353.1">
    <property type="nucleotide sequence ID" value="NM_001123881.1"/>
</dbReference>
<dbReference type="RefSeq" id="NP_173899.1">
    <molecule id="Q9FRH7-1"/>
    <property type="nucleotide sequence ID" value="NM_102338.3"/>
</dbReference>
<dbReference type="RefSeq" id="NP_973909.1">
    <property type="nucleotide sequence ID" value="NM_202180.1"/>
</dbReference>
<dbReference type="SMR" id="Q9FRH7"/>
<dbReference type="BioGRID" id="24349">
    <property type="interactions" value="5"/>
</dbReference>
<dbReference type="FunCoup" id="Q9FRH7">
    <property type="interactions" value="1874"/>
</dbReference>
<dbReference type="IntAct" id="Q9FRH7">
    <property type="interactions" value="3"/>
</dbReference>
<dbReference type="STRING" id="3702.Q9FRH7"/>
<dbReference type="GlyGen" id="Q9FRH7">
    <property type="glycosylation" value="2 sites"/>
</dbReference>
<dbReference type="iPTMnet" id="Q9FRH7"/>
<dbReference type="PaxDb" id="3702-AT1G25280.1"/>
<dbReference type="ProteomicsDB" id="246410">
    <molecule id="Q9FRH7-1"/>
</dbReference>
<dbReference type="EnsemblPlants" id="AT1G25280.1">
    <molecule id="Q9FRH7-1"/>
    <property type="protein sequence ID" value="AT1G25280.1"/>
    <property type="gene ID" value="AT1G25280"/>
</dbReference>
<dbReference type="GeneID" id="839112"/>
<dbReference type="Gramene" id="AT1G25280.1">
    <molecule id="Q9FRH7-1"/>
    <property type="protein sequence ID" value="AT1G25280.1"/>
    <property type="gene ID" value="AT1G25280"/>
</dbReference>
<dbReference type="KEGG" id="ath:AT1G25280"/>
<dbReference type="Araport" id="AT1G25280"/>
<dbReference type="TAIR" id="AT1G25280">
    <property type="gene designation" value="TLP10"/>
</dbReference>
<dbReference type="eggNOG" id="KOG2502">
    <property type="taxonomic scope" value="Eukaryota"/>
</dbReference>
<dbReference type="HOGENOM" id="CLU_028236_3_0_1"/>
<dbReference type="InParanoid" id="Q9FRH7"/>
<dbReference type="OMA" id="DINGSIM"/>
<dbReference type="OrthoDB" id="8775810at2759"/>
<dbReference type="PhylomeDB" id="Q9FRH7"/>
<dbReference type="UniPathway" id="UPA00143"/>
<dbReference type="PRO" id="PR:Q9FRH7"/>
<dbReference type="Proteomes" id="UP000006548">
    <property type="component" value="Chromosome 1"/>
</dbReference>
<dbReference type="ExpressionAtlas" id="Q9FRH7">
    <property type="expression patterns" value="baseline and differential"/>
</dbReference>
<dbReference type="GO" id="GO:0005829">
    <property type="term" value="C:cytosol"/>
    <property type="evidence" value="ECO:0000314"/>
    <property type="project" value="TAIR"/>
</dbReference>
<dbReference type="GO" id="GO:0005634">
    <property type="term" value="C:nucleus"/>
    <property type="evidence" value="ECO:0000314"/>
    <property type="project" value="TAIR"/>
</dbReference>
<dbReference type="GO" id="GO:0005886">
    <property type="term" value="C:plasma membrane"/>
    <property type="evidence" value="ECO:0000314"/>
    <property type="project" value="TAIR"/>
</dbReference>
<dbReference type="GO" id="GO:0009536">
    <property type="term" value="C:plastid"/>
    <property type="evidence" value="ECO:0000314"/>
    <property type="project" value="TAIR"/>
</dbReference>
<dbReference type="GO" id="GO:0016567">
    <property type="term" value="P:protein ubiquitination"/>
    <property type="evidence" value="ECO:0007669"/>
    <property type="project" value="UniProtKB-UniPathway"/>
</dbReference>
<dbReference type="GO" id="GO:0006355">
    <property type="term" value="P:regulation of DNA-templated transcription"/>
    <property type="evidence" value="ECO:0000304"/>
    <property type="project" value="TAIR"/>
</dbReference>
<dbReference type="GO" id="GO:0009620">
    <property type="term" value="P:response to fungus"/>
    <property type="evidence" value="ECO:0000315"/>
    <property type="project" value="TAIR"/>
</dbReference>
<dbReference type="CDD" id="cd22153">
    <property type="entry name" value="F-box_AtTLP-like"/>
    <property type="match status" value="1"/>
</dbReference>
<dbReference type="FunFam" id="1.20.1280.50:FF:000047">
    <property type="entry name" value="Tubby-like F-box protein"/>
    <property type="match status" value="1"/>
</dbReference>
<dbReference type="FunFam" id="3.20.90.10:FF:000003">
    <property type="entry name" value="Tubby-like F-box protein"/>
    <property type="match status" value="1"/>
</dbReference>
<dbReference type="Gene3D" id="1.20.1280.50">
    <property type="match status" value="1"/>
</dbReference>
<dbReference type="Gene3D" id="3.20.90.10">
    <property type="entry name" value="Tubby Protein, Chain A"/>
    <property type="match status" value="1"/>
</dbReference>
<dbReference type="InterPro" id="IPR036047">
    <property type="entry name" value="F-box-like_dom_sf"/>
</dbReference>
<dbReference type="InterPro" id="IPR001810">
    <property type="entry name" value="F-box_dom"/>
</dbReference>
<dbReference type="InterPro" id="IPR025659">
    <property type="entry name" value="Tubby-like_C"/>
</dbReference>
<dbReference type="InterPro" id="IPR000007">
    <property type="entry name" value="Tubby_C"/>
</dbReference>
<dbReference type="InterPro" id="IPR018066">
    <property type="entry name" value="Tubby_C_CS"/>
</dbReference>
<dbReference type="PANTHER" id="PTHR16517:SF157">
    <property type="entry name" value="TUBBY-LIKE F-BOX PROTEIN 10"/>
    <property type="match status" value="1"/>
</dbReference>
<dbReference type="PANTHER" id="PTHR16517">
    <property type="entry name" value="TUBBY-RELATED"/>
    <property type="match status" value="1"/>
</dbReference>
<dbReference type="Pfam" id="PF12937">
    <property type="entry name" value="F-box-like"/>
    <property type="match status" value="1"/>
</dbReference>
<dbReference type="Pfam" id="PF01167">
    <property type="entry name" value="Tub"/>
    <property type="match status" value="1"/>
</dbReference>
<dbReference type="PRINTS" id="PR01573">
    <property type="entry name" value="SUPERTUBBY"/>
</dbReference>
<dbReference type="SUPFAM" id="SSF81383">
    <property type="entry name" value="F-box domain"/>
    <property type="match status" value="1"/>
</dbReference>
<dbReference type="SUPFAM" id="SSF54518">
    <property type="entry name" value="Tubby C-terminal domain-like"/>
    <property type="match status" value="1"/>
</dbReference>
<dbReference type="PROSITE" id="PS01200">
    <property type="entry name" value="TUB_1"/>
    <property type="match status" value="1"/>
</dbReference>
<dbReference type="PROSITE" id="PS01201">
    <property type="entry name" value="TUB_2"/>
    <property type="match status" value="1"/>
</dbReference>
<proteinExistence type="evidence at protein level"/>
<sequence length="445" mass="50010">MSFRGIVQDLRDGFGSLSRRSFDFRLSSLHKGKAQGSSFREYSSSRDLLSPVIVQTSRWANLPPELLFDVIKRLEESESNWPARKHVVACASVCRSWRAMCQEIVLGPEICGKLTFPVSLKQPGPRDAMIQCFIKRDKSKLTFHLFLCLSPALLVENGKFLLSAKRTRRTTRTEYIISMDADNISRSSNSYLGKLRSNFLGTKFLVYDTQPPPNTSSSALITDRTSRSRFHSRRVSPKVPSGSYNIAQITYELNVLGTRGPRRMHCIMNSIPISSLEPGGSVPNQPEKLVPAPYSLDDSFRSNISFSKSSFDHRSLDFSSSRFSEMGISCDDNEEEASFRPLILKNKQPRWHEQLQCWCLNFRGRVTVASVKNFQLVAARQPQPQGTGAAAAPTSAPAHPEQDKVILQFGKVGKDMFTMDYRYPLSAFQAFAICLSSFDTKLACE</sequence>
<feature type="chain" id="PRO_0000272238" description="Tubby-like F-box protein 10">
    <location>
        <begin position="1"/>
        <end position="445"/>
    </location>
</feature>
<feature type="domain" description="F-box" evidence="4">
    <location>
        <begin position="57"/>
        <end position="112"/>
    </location>
</feature>
<feature type="region of interest" description="Disordered" evidence="5">
    <location>
        <begin position="382"/>
        <end position="401"/>
    </location>
</feature>
<feature type="compositionally biased region" description="Low complexity" evidence="5">
    <location>
        <begin position="382"/>
        <end position="398"/>
    </location>
</feature>
<feature type="sequence variant" description="In strain: cv. Lisse." evidence="6">
    <original>L</original>
    <variation>I</variation>
    <location>
        <position position="114"/>
    </location>
</feature>
<feature type="sequence variant" description="In strain: cv. Bretagny." evidence="6">
    <original>Y</original>
    <variation>F</variation>
    <location>
        <position position="244"/>
    </location>
</feature>
<feature type="sequence conflict" description="In Ref. 5; BAH19883." evidence="11" ref="5">
    <original>K</original>
    <variation>E</variation>
    <location>
        <position position="404"/>
    </location>
</feature>
<gene>
    <name evidence="11" type="primary">TULP10</name>
    <name evidence="9" type="synonym">SKIP26</name>
    <name evidence="10" type="synonym">TLP10</name>
    <name evidence="12" type="ordered locus">At1g25280</name>
    <name evidence="13" type="ORF">F4F7.13</name>
</gene>
<accession>Q9FRH7</accession>
<accession>B9DGL6</accession>
<accession>Q84JM8</accession>
<accession>Q84UG2</accession>
<accession>Q84UG3</accession>
<accession>Q8H0W5</accession>
<protein>
    <recommendedName>
        <fullName evidence="10">Tubby-like F-box protein 10</fullName>
        <shortName evidence="10">AtTLP10</shortName>
    </recommendedName>
    <alternativeName>
        <fullName evidence="9">SKP1-interacting partner 26</fullName>
    </alternativeName>
</protein>
<name>TLP10_ARATH</name>
<reference key="1">
    <citation type="journal article" date="2004" name="Plant Physiol.">
        <title>Molecular analyses of the Arabidopsis TUBBY-like protein gene family.</title>
        <authorList>
            <person name="Lai C.-P."/>
            <person name="Lee C.-L."/>
            <person name="Chen P.-H."/>
            <person name="Wu S.-H."/>
            <person name="Yang C.-C."/>
            <person name="Shaw J.-F."/>
        </authorList>
    </citation>
    <scope>NUCLEOTIDE SEQUENCE [MRNA]</scope>
    <scope>TISSUE SPECIFICITY</scope>
    <scope>GENE FAMILY</scope>
    <scope>NOMENCLATURE</scope>
</reference>
<reference key="2">
    <citation type="journal article" date="2000" name="Nature">
        <title>Sequence and analysis of chromosome 1 of the plant Arabidopsis thaliana.</title>
        <authorList>
            <person name="Theologis A."/>
            <person name="Ecker J.R."/>
            <person name="Palm C.J."/>
            <person name="Federspiel N.A."/>
            <person name="Kaul S."/>
            <person name="White O."/>
            <person name="Alonso J."/>
            <person name="Altafi H."/>
            <person name="Araujo R."/>
            <person name="Bowman C.L."/>
            <person name="Brooks S.Y."/>
            <person name="Buehler E."/>
            <person name="Chan A."/>
            <person name="Chao Q."/>
            <person name="Chen H."/>
            <person name="Cheuk R.F."/>
            <person name="Chin C.W."/>
            <person name="Chung M.K."/>
            <person name="Conn L."/>
            <person name="Conway A.B."/>
            <person name="Conway A.R."/>
            <person name="Creasy T.H."/>
            <person name="Dewar K."/>
            <person name="Dunn P."/>
            <person name="Etgu P."/>
            <person name="Feldblyum T.V."/>
            <person name="Feng J.-D."/>
            <person name="Fong B."/>
            <person name="Fujii C.Y."/>
            <person name="Gill J.E."/>
            <person name="Goldsmith A.D."/>
            <person name="Haas B."/>
            <person name="Hansen N.F."/>
            <person name="Hughes B."/>
            <person name="Huizar L."/>
            <person name="Hunter J.L."/>
            <person name="Jenkins J."/>
            <person name="Johnson-Hopson C."/>
            <person name="Khan S."/>
            <person name="Khaykin E."/>
            <person name="Kim C.J."/>
            <person name="Koo H.L."/>
            <person name="Kremenetskaia I."/>
            <person name="Kurtz D.B."/>
            <person name="Kwan A."/>
            <person name="Lam B."/>
            <person name="Langin-Hooper S."/>
            <person name="Lee A."/>
            <person name="Lee J.M."/>
            <person name="Lenz C.A."/>
            <person name="Li J.H."/>
            <person name="Li Y.-P."/>
            <person name="Lin X."/>
            <person name="Liu S.X."/>
            <person name="Liu Z.A."/>
            <person name="Luros J.S."/>
            <person name="Maiti R."/>
            <person name="Marziali A."/>
            <person name="Militscher J."/>
            <person name="Miranda M."/>
            <person name="Nguyen M."/>
            <person name="Nierman W.C."/>
            <person name="Osborne B.I."/>
            <person name="Pai G."/>
            <person name="Peterson J."/>
            <person name="Pham P.K."/>
            <person name="Rizzo M."/>
            <person name="Rooney T."/>
            <person name="Rowley D."/>
            <person name="Sakano H."/>
            <person name="Salzberg S.L."/>
            <person name="Schwartz J.R."/>
            <person name="Shinn P."/>
            <person name="Southwick A.M."/>
            <person name="Sun H."/>
            <person name="Tallon L.J."/>
            <person name="Tambunga G."/>
            <person name="Toriumi M.J."/>
            <person name="Town C.D."/>
            <person name="Utterback T."/>
            <person name="Van Aken S."/>
            <person name="Vaysberg M."/>
            <person name="Vysotskaia V.S."/>
            <person name="Walker M."/>
            <person name="Wu D."/>
            <person name="Yu G."/>
            <person name="Fraser C.M."/>
            <person name="Venter J.C."/>
            <person name="Davis R.W."/>
        </authorList>
    </citation>
    <scope>NUCLEOTIDE SEQUENCE [LARGE SCALE GENOMIC DNA]</scope>
    <source>
        <strain>cv. Columbia</strain>
    </source>
</reference>
<reference key="3">
    <citation type="journal article" date="2017" name="Plant J.">
        <title>Araport11: a complete reannotation of the Arabidopsis thaliana reference genome.</title>
        <authorList>
            <person name="Cheng C.Y."/>
            <person name="Krishnakumar V."/>
            <person name="Chan A.P."/>
            <person name="Thibaud-Nissen F."/>
            <person name="Schobel S."/>
            <person name="Town C.D."/>
        </authorList>
    </citation>
    <scope>GENOME REANNOTATION</scope>
    <source>
        <strain>cv. Columbia</strain>
    </source>
</reference>
<reference key="4">
    <citation type="journal article" date="2003" name="Genetics">
        <title>Selection on rapidly evolving proteins in the Arabidopsis genome.</title>
        <authorList>
            <person name="Barrier M."/>
            <person name="Bustamante C.D."/>
            <person name="Yu J."/>
            <person name="Purugganan M.D."/>
        </authorList>
    </citation>
    <scope>NUCLEOTIDE SEQUENCE [GENOMIC DNA] OF 18-432</scope>
    <scope>VARIANTS ILE-114 AND PHE-244</scope>
    <source>
        <strain>cv. Bla-1</strain>
        <strain>cv. Bretagny</strain>
        <strain>cv. Bs-1</strain>
        <strain>cv. Bu-0</strain>
        <strain>cv. Chi-1</strain>
        <strain>cv. Co-1</strain>
        <strain>cv. Hau-0</strain>
        <strain>cv. Jl-1</strain>
        <strain>cv. Kas-1</strain>
        <strain>cv. Kent</strain>
        <strain>cv. Lisse</strain>
    </source>
</reference>
<reference key="5">
    <citation type="journal article" date="2009" name="DNA Res.">
        <title>Analysis of multiple occurrences of alternative splicing events in Arabidopsis thaliana using novel sequenced full-length cDNAs.</title>
        <authorList>
            <person name="Iida K."/>
            <person name="Fukami-Kobayashi K."/>
            <person name="Toyoda A."/>
            <person name="Sakaki Y."/>
            <person name="Kobayashi M."/>
            <person name="Seki M."/>
            <person name="Shinozaki K."/>
        </authorList>
    </citation>
    <scope>NUCLEOTIDE SEQUENCE [LARGE SCALE MRNA] OF 129-445</scope>
    <source>
        <strain>cv. Columbia</strain>
    </source>
</reference>
<reference key="6">
    <citation type="journal article" date="2003" name="Science">
        <title>Empirical analysis of transcriptional activity in the Arabidopsis genome.</title>
        <authorList>
            <person name="Yamada K."/>
            <person name="Lim J."/>
            <person name="Dale J.M."/>
            <person name="Chen H."/>
            <person name="Shinn P."/>
            <person name="Palm C.J."/>
            <person name="Southwick A.M."/>
            <person name="Wu H.C."/>
            <person name="Kim C.J."/>
            <person name="Nguyen M."/>
            <person name="Pham P.K."/>
            <person name="Cheuk R.F."/>
            <person name="Karlin-Newmann G."/>
            <person name="Liu S.X."/>
            <person name="Lam B."/>
            <person name="Sakano H."/>
            <person name="Wu T."/>
            <person name="Yu G."/>
            <person name="Miranda M."/>
            <person name="Quach H.L."/>
            <person name="Tripp M."/>
            <person name="Chang C.H."/>
            <person name="Lee J.M."/>
            <person name="Toriumi M.J."/>
            <person name="Chan M.M."/>
            <person name="Tang C.C."/>
            <person name="Onodera C.S."/>
            <person name="Deng J.M."/>
            <person name="Akiyama K."/>
            <person name="Ansari Y."/>
            <person name="Arakawa T."/>
            <person name="Banh J."/>
            <person name="Banno F."/>
            <person name="Bowser L."/>
            <person name="Brooks S.Y."/>
            <person name="Carninci P."/>
            <person name="Chao Q."/>
            <person name="Choy N."/>
            <person name="Enju A."/>
            <person name="Goldsmith A.D."/>
            <person name="Gurjal M."/>
            <person name="Hansen N.F."/>
            <person name="Hayashizaki Y."/>
            <person name="Johnson-Hopson C."/>
            <person name="Hsuan V.W."/>
            <person name="Iida K."/>
            <person name="Karnes M."/>
            <person name="Khan S."/>
            <person name="Koesema E."/>
            <person name="Ishida J."/>
            <person name="Jiang P.X."/>
            <person name="Jones T."/>
            <person name="Kawai J."/>
            <person name="Kamiya A."/>
            <person name="Meyers C."/>
            <person name="Nakajima M."/>
            <person name="Narusaka M."/>
            <person name="Seki M."/>
            <person name="Sakurai T."/>
            <person name="Satou M."/>
            <person name="Tamse R."/>
            <person name="Vaysberg M."/>
            <person name="Wallender E.K."/>
            <person name="Wong C."/>
            <person name="Yamamura Y."/>
            <person name="Yuan S."/>
            <person name="Shinozaki K."/>
            <person name="Davis R.W."/>
            <person name="Theologis A."/>
            <person name="Ecker J.R."/>
        </authorList>
    </citation>
    <scope>NUCLEOTIDE SEQUENCE [LARGE SCALE MRNA] OF 179-445</scope>
    <source>
        <strain>cv. Columbia</strain>
    </source>
</reference>
<reference key="7">
    <citation type="journal article" date="2003" name="Plant J.">
        <title>Protein interaction analysis of SCF ubiquitin E3 ligase subunits from Arabidopsis.</title>
        <authorList>
            <person name="Risseeuw E.P."/>
            <person name="Daskalchuk T.E."/>
            <person name="Banks T.W."/>
            <person name="Liu E."/>
            <person name="Cotelesage J."/>
            <person name="Hellmann H."/>
            <person name="Estelle M."/>
            <person name="Somers D.E."/>
            <person name="Crosby W.L."/>
        </authorList>
    </citation>
    <scope>INTERACTION WITH SKP1A/ASK1</scope>
</reference>
<comment type="function">
    <text evidence="3">Component of SCF(ASK-cullin-F-box) E3 ubiquitin ligase complexes, which may mediate the ubiquitination and subsequent proteasomal degradation of target proteins.</text>
</comment>
<comment type="pathway">
    <text evidence="11">Protein modification; protein ubiquitination.</text>
</comment>
<comment type="subunit">
    <text evidence="3 7">Part of a SCF (ASK-cullin-F-box) protein ligase complex (By similarity). Interacts with SKP1A/ASK1.</text>
</comment>
<comment type="subcellular location">
    <subcellularLocation>
        <location evidence="2">Nucleus</location>
    </subcellularLocation>
</comment>
<comment type="alternative products">
    <event type="alternative splicing"/>
    <isoform>
        <id>Q9FRH7-1</id>
        <name>1</name>
        <sequence type="displayed"/>
    </isoform>
    <text>A number of isoforms are produced. According to EST sequences.</text>
</comment>
<comment type="tissue specificity">
    <text evidence="8">Ubiquitous.</text>
</comment>
<comment type="domain">
    <text evidence="1">The F-box is necessary for the interaction with ASK proteins.</text>
</comment>
<comment type="similarity">
    <text evidence="11">Belongs to the TUB family.</text>
</comment>
<keyword id="KW-0025">Alternative splicing</keyword>
<keyword id="KW-0539">Nucleus</keyword>
<keyword id="KW-1185">Reference proteome</keyword>
<keyword id="KW-0833">Ubl conjugation pathway</keyword>